<evidence type="ECO:0000255" key="1">
    <source>
        <dbReference type="HAMAP-Rule" id="MF_01341"/>
    </source>
</evidence>
<evidence type="ECO:0000256" key="2">
    <source>
        <dbReference type="SAM" id="MobiDB-lite"/>
    </source>
</evidence>
<evidence type="ECO:0000305" key="3"/>
<proteinExistence type="inferred from homology"/>
<protein>
    <recommendedName>
        <fullName evidence="1">Large ribosomal subunit protein uL15</fullName>
    </recommendedName>
    <alternativeName>
        <fullName evidence="3">50S ribosomal protein L15</fullName>
    </alternativeName>
</protein>
<accession>A1VJ34</accession>
<dbReference type="EMBL" id="CP000529">
    <property type="protein sequence ID" value="ABM35662.1"/>
    <property type="molecule type" value="Genomic_DNA"/>
</dbReference>
<dbReference type="RefSeq" id="WP_011799768.1">
    <property type="nucleotide sequence ID" value="NC_008781.1"/>
</dbReference>
<dbReference type="SMR" id="A1VJ34"/>
<dbReference type="STRING" id="365044.Pnap_0339"/>
<dbReference type="KEGG" id="pna:Pnap_0339"/>
<dbReference type="eggNOG" id="COG0200">
    <property type="taxonomic scope" value="Bacteria"/>
</dbReference>
<dbReference type="HOGENOM" id="CLU_055188_4_2_4"/>
<dbReference type="OrthoDB" id="9810293at2"/>
<dbReference type="Proteomes" id="UP000000644">
    <property type="component" value="Chromosome"/>
</dbReference>
<dbReference type="GO" id="GO:0022625">
    <property type="term" value="C:cytosolic large ribosomal subunit"/>
    <property type="evidence" value="ECO:0007669"/>
    <property type="project" value="TreeGrafter"/>
</dbReference>
<dbReference type="GO" id="GO:0019843">
    <property type="term" value="F:rRNA binding"/>
    <property type="evidence" value="ECO:0007669"/>
    <property type="project" value="UniProtKB-UniRule"/>
</dbReference>
<dbReference type="GO" id="GO:0003735">
    <property type="term" value="F:structural constituent of ribosome"/>
    <property type="evidence" value="ECO:0007669"/>
    <property type="project" value="InterPro"/>
</dbReference>
<dbReference type="GO" id="GO:0006412">
    <property type="term" value="P:translation"/>
    <property type="evidence" value="ECO:0007669"/>
    <property type="project" value="UniProtKB-UniRule"/>
</dbReference>
<dbReference type="Gene3D" id="3.100.10.10">
    <property type="match status" value="1"/>
</dbReference>
<dbReference type="HAMAP" id="MF_01341">
    <property type="entry name" value="Ribosomal_uL15"/>
    <property type="match status" value="1"/>
</dbReference>
<dbReference type="InterPro" id="IPR030878">
    <property type="entry name" value="Ribosomal_uL15"/>
</dbReference>
<dbReference type="InterPro" id="IPR021131">
    <property type="entry name" value="Ribosomal_uL15/eL18"/>
</dbReference>
<dbReference type="InterPro" id="IPR036227">
    <property type="entry name" value="Ribosomal_uL15/eL18_sf"/>
</dbReference>
<dbReference type="InterPro" id="IPR005749">
    <property type="entry name" value="Ribosomal_uL15_bac-type"/>
</dbReference>
<dbReference type="NCBIfam" id="TIGR01071">
    <property type="entry name" value="rplO_bact"/>
    <property type="match status" value="1"/>
</dbReference>
<dbReference type="PANTHER" id="PTHR12934">
    <property type="entry name" value="50S RIBOSOMAL PROTEIN L15"/>
    <property type="match status" value="1"/>
</dbReference>
<dbReference type="PANTHER" id="PTHR12934:SF11">
    <property type="entry name" value="LARGE RIBOSOMAL SUBUNIT PROTEIN UL15M"/>
    <property type="match status" value="1"/>
</dbReference>
<dbReference type="Pfam" id="PF00828">
    <property type="entry name" value="Ribosomal_L27A"/>
    <property type="match status" value="1"/>
</dbReference>
<dbReference type="SUPFAM" id="SSF52080">
    <property type="entry name" value="Ribosomal proteins L15p and L18e"/>
    <property type="match status" value="1"/>
</dbReference>
<reference key="1">
    <citation type="journal article" date="2009" name="Environ. Microbiol.">
        <title>The genome of Polaromonas naphthalenivorans strain CJ2, isolated from coal tar-contaminated sediment, reveals physiological and metabolic versatility and evolution through extensive horizontal gene transfer.</title>
        <authorList>
            <person name="Yagi J.M."/>
            <person name="Sims D."/>
            <person name="Brettin T."/>
            <person name="Bruce D."/>
            <person name="Madsen E.L."/>
        </authorList>
    </citation>
    <scope>NUCLEOTIDE SEQUENCE [LARGE SCALE GENOMIC DNA]</scope>
    <source>
        <strain>CJ2</strain>
    </source>
</reference>
<feature type="chain" id="PRO_1000054510" description="Large ribosomal subunit protein uL15">
    <location>
        <begin position="1"/>
        <end position="143"/>
    </location>
</feature>
<feature type="region of interest" description="Disordered" evidence="2">
    <location>
        <begin position="1"/>
        <end position="59"/>
    </location>
</feature>
<feature type="compositionally biased region" description="Gly residues" evidence="2">
    <location>
        <begin position="21"/>
        <end position="31"/>
    </location>
</feature>
<comment type="function">
    <text evidence="1">Binds to the 23S rRNA.</text>
</comment>
<comment type="subunit">
    <text evidence="1">Part of the 50S ribosomal subunit.</text>
</comment>
<comment type="similarity">
    <text evidence="1">Belongs to the universal ribosomal protein uL15 family.</text>
</comment>
<organism>
    <name type="scientific">Polaromonas naphthalenivorans (strain CJ2)</name>
    <dbReference type="NCBI Taxonomy" id="365044"/>
    <lineage>
        <taxon>Bacteria</taxon>
        <taxon>Pseudomonadati</taxon>
        <taxon>Pseudomonadota</taxon>
        <taxon>Betaproteobacteria</taxon>
        <taxon>Burkholderiales</taxon>
        <taxon>Comamonadaceae</taxon>
        <taxon>Polaromonas</taxon>
    </lineage>
</organism>
<keyword id="KW-1185">Reference proteome</keyword>
<keyword id="KW-0687">Ribonucleoprotein</keyword>
<keyword id="KW-0689">Ribosomal protein</keyword>
<keyword id="KW-0694">RNA-binding</keyword>
<keyword id="KW-0699">rRNA-binding</keyword>
<name>RL15_POLNA</name>
<gene>
    <name evidence="1" type="primary">rplO</name>
    <name type="ordered locus">Pnap_0339</name>
</gene>
<sequence>MELNTITPGQGAKHAKRRVGRGIGSGLGKTAGRGHKGQKSRSGGYHKVGFEGGQMPMQRRLPKRGFKSHLLKFNAEVTLTALEQLGLAEVDLLTLKQSGLVGQIAKNVKIINTGSLSLAVKLTGISATAGAKTIIEAAGGSIA</sequence>